<gene>
    <name evidence="1" type="primary">nadK</name>
    <name type="ordered locus">aq_909</name>
</gene>
<comment type="function">
    <text evidence="1">Involved in the regulation of the intracellular balance of NAD and NADP, and is a key enzyme in the biosynthesis of NADP. Catalyzes specifically the phosphorylation on 2'-hydroxyl of the adenosine moiety of NAD to yield NADP.</text>
</comment>
<comment type="catalytic activity">
    <reaction evidence="1">
        <text>NAD(+) + ATP = ADP + NADP(+) + H(+)</text>
        <dbReference type="Rhea" id="RHEA:18629"/>
        <dbReference type="ChEBI" id="CHEBI:15378"/>
        <dbReference type="ChEBI" id="CHEBI:30616"/>
        <dbReference type="ChEBI" id="CHEBI:57540"/>
        <dbReference type="ChEBI" id="CHEBI:58349"/>
        <dbReference type="ChEBI" id="CHEBI:456216"/>
        <dbReference type="EC" id="2.7.1.23"/>
    </reaction>
</comment>
<comment type="cofactor">
    <cofactor evidence="1">
        <name>a divalent metal cation</name>
        <dbReference type="ChEBI" id="CHEBI:60240"/>
    </cofactor>
</comment>
<comment type="subcellular location">
    <subcellularLocation>
        <location evidence="1">Cytoplasm</location>
    </subcellularLocation>
</comment>
<comment type="similarity">
    <text evidence="1">Belongs to the NAD kinase family.</text>
</comment>
<feature type="chain" id="PRO_0000120590" description="NAD kinase">
    <location>
        <begin position="1"/>
        <end position="274"/>
    </location>
</feature>
<feature type="active site" description="Proton acceptor" evidence="1">
    <location>
        <position position="59"/>
    </location>
</feature>
<feature type="binding site" evidence="1">
    <location>
        <begin position="59"/>
        <end position="60"/>
    </location>
    <ligand>
        <name>NAD(+)</name>
        <dbReference type="ChEBI" id="CHEBI:57540"/>
    </ligand>
</feature>
<feature type="binding site" evidence="1">
    <location>
        <begin position="133"/>
        <end position="134"/>
    </location>
    <ligand>
        <name>NAD(+)</name>
        <dbReference type="ChEBI" id="CHEBI:57540"/>
    </ligand>
</feature>
<feature type="binding site" evidence="1">
    <location>
        <position position="144"/>
    </location>
    <ligand>
        <name>NAD(+)</name>
        <dbReference type="ChEBI" id="CHEBI:57540"/>
    </ligand>
</feature>
<feature type="binding site" evidence="1">
    <location>
        <position position="163"/>
    </location>
    <ligand>
        <name>NAD(+)</name>
        <dbReference type="ChEBI" id="CHEBI:57540"/>
    </ligand>
</feature>
<feature type="binding site" evidence="1">
    <location>
        <begin position="174"/>
        <end position="179"/>
    </location>
    <ligand>
        <name>NAD(+)</name>
        <dbReference type="ChEBI" id="CHEBI:57540"/>
    </ligand>
</feature>
<feature type="binding site" evidence="1">
    <location>
        <position position="233"/>
    </location>
    <ligand>
        <name>NAD(+)</name>
        <dbReference type="ChEBI" id="CHEBI:57540"/>
    </ligand>
</feature>
<dbReference type="EC" id="2.7.1.23" evidence="1"/>
<dbReference type="EMBL" id="AE000657">
    <property type="protein sequence ID" value="AAC07026.1"/>
    <property type="molecule type" value="Genomic_DNA"/>
</dbReference>
<dbReference type="PIR" id="D70378">
    <property type="entry name" value="D70378"/>
</dbReference>
<dbReference type="RefSeq" id="NP_213617.1">
    <property type="nucleotide sequence ID" value="NC_000918.1"/>
</dbReference>
<dbReference type="RefSeq" id="WP_010880555.1">
    <property type="nucleotide sequence ID" value="NC_000918.1"/>
</dbReference>
<dbReference type="SMR" id="O67055"/>
<dbReference type="FunCoup" id="O67055">
    <property type="interactions" value="447"/>
</dbReference>
<dbReference type="STRING" id="224324.aq_909"/>
<dbReference type="EnsemblBacteria" id="AAC07026">
    <property type="protein sequence ID" value="AAC07026"/>
    <property type="gene ID" value="aq_909"/>
</dbReference>
<dbReference type="KEGG" id="aae:aq_909"/>
<dbReference type="PATRIC" id="fig|224324.8.peg.709"/>
<dbReference type="eggNOG" id="COG0061">
    <property type="taxonomic scope" value="Bacteria"/>
</dbReference>
<dbReference type="HOGENOM" id="CLU_008831_0_3_0"/>
<dbReference type="InParanoid" id="O67055"/>
<dbReference type="OrthoDB" id="9774737at2"/>
<dbReference type="Proteomes" id="UP000000798">
    <property type="component" value="Chromosome"/>
</dbReference>
<dbReference type="GO" id="GO:0005737">
    <property type="term" value="C:cytoplasm"/>
    <property type="evidence" value="ECO:0007669"/>
    <property type="project" value="UniProtKB-SubCell"/>
</dbReference>
<dbReference type="GO" id="GO:0005524">
    <property type="term" value="F:ATP binding"/>
    <property type="evidence" value="ECO:0007669"/>
    <property type="project" value="UniProtKB-KW"/>
</dbReference>
<dbReference type="GO" id="GO:0046872">
    <property type="term" value="F:metal ion binding"/>
    <property type="evidence" value="ECO:0007669"/>
    <property type="project" value="UniProtKB-UniRule"/>
</dbReference>
<dbReference type="GO" id="GO:0051287">
    <property type="term" value="F:NAD binding"/>
    <property type="evidence" value="ECO:0007669"/>
    <property type="project" value="UniProtKB-ARBA"/>
</dbReference>
<dbReference type="GO" id="GO:0003951">
    <property type="term" value="F:NAD+ kinase activity"/>
    <property type="evidence" value="ECO:0000318"/>
    <property type="project" value="GO_Central"/>
</dbReference>
<dbReference type="GO" id="GO:0019674">
    <property type="term" value="P:NAD metabolic process"/>
    <property type="evidence" value="ECO:0007669"/>
    <property type="project" value="InterPro"/>
</dbReference>
<dbReference type="GO" id="GO:0006741">
    <property type="term" value="P:NADP biosynthetic process"/>
    <property type="evidence" value="ECO:0000318"/>
    <property type="project" value="GO_Central"/>
</dbReference>
<dbReference type="FunFam" id="2.60.200.30:FF:000009">
    <property type="entry name" value="Poly(P)/ATP NAD kinase"/>
    <property type="match status" value="1"/>
</dbReference>
<dbReference type="Gene3D" id="3.40.50.10330">
    <property type="entry name" value="Probable inorganic polyphosphate/atp-NAD kinase, domain 1"/>
    <property type="match status" value="1"/>
</dbReference>
<dbReference type="Gene3D" id="2.60.200.30">
    <property type="entry name" value="Probable inorganic polyphosphate/atp-NAD kinase, domain 2"/>
    <property type="match status" value="1"/>
</dbReference>
<dbReference type="HAMAP" id="MF_00361">
    <property type="entry name" value="NAD_kinase"/>
    <property type="match status" value="1"/>
</dbReference>
<dbReference type="InterPro" id="IPR017438">
    <property type="entry name" value="ATP-NAD_kinase_N"/>
</dbReference>
<dbReference type="InterPro" id="IPR017437">
    <property type="entry name" value="ATP-NAD_kinase_PpnK-typ_C"/>
</dbReference>
<dbReference type="InterPro" id="IPR016064">
    <property type="entry name" value="NAD/diacylglycerol_kinase_sf"/>
</dbReference>
<dbReference type="InterPro" id="IPR002504">
    <property type="entry name" value="NADK"/>
</dbReference>
<dbReference type="PANTHER" id="PTHR20275">
    <property type="entry name" value="NAD KINASE"/>
    <property type="match status" value="1"/>
</dbReference>
<dbReference type="PANTHER" id="PTHR20275:SF0">
    <property type="entry name" value="NAD KINASE"/>
    <property type="match status" value="1"/>
</dbReference>
<dbReference type="Pfam" id="PF01513">
    <property type="entry name" value="NAD_kinase"/>
    <property type="match status" value="1"/>
</dbReference>
<dbReference type="Pfam" id="PF20143">
    <property type="entry name" value="NAD_kinase_C"/>
    <property type="match status" value="1"/>
</dbReference>
<dbReference type="SUPFAM" id="SSF111331">
    <property type="entry name" value="NAD kinase/diacylglycerol kinase-like"/>
    <property type="match status" value="1"/>
</dbReference>
<evidence type="ECO:0000255" key="1">
    <source>
        <dbReference type="HAMAP-Rule" id="MF_00361"/>
    </source>
</evidence>
<accession>O67055</accession>
<proteinExistence type="inferred from homology"/>
<protein>
    <recommendedName>
        <fullName evidence="1">NAD kinase</fullName>
        <ecNumber evidence="1">2.7.1.23</ecNumber>
    </recommendedName>
    <alternativeName>
        <fullName evidence="1">ATP-dependent NAD kinase</fullName>
    </alternativeName>
</protein>
<reference key="1">
    <citation type="journal article" date="1998" name="Nature">
        <title>The complete genome of the hyperthermophilic bacterium Aquifex aeolicus.</title>
        <authorList>
            <person name="Deckert G."/>
            <person name="Warren P.V."/>
            <person name="Gaasterland T."/>
            <person name="Young W.G."/>
            <person name="Lenox A.L."/>
            <person name="Graham D.E."/>
            <person name="Overbeek R."/>
            <person name="Snead M.A."/>
            <person name="Keller M."/>
            <person name="Aujay M."/>
            <person name="Huber R."/>
            <person name="Feldman R.A."/>
            <person name="Short J.M."/>
            <person name="Olsen G.J."/>
            <person name="Swanson R.V."/>
        </authorList>
    </citation>
    <scope>NUCLEOTIDE SEQUENCE [LARGE SCALE GENOMIC DNA]</scope>
    <source>
        <strain>VF5</strain>
    </source>
</reference>
<keyword id="KW-0067">ATP-binding</keyword>
<keyword id="KW-0963">Cytoplasm</keyword>
<keyword id="KW-0418">Kinase</keyword>
<keyword id="KW-0520">NAD</keyword>
<keyword id="KW-0521">NADP</keyword>
<keyword id="KW-0547">Nucleotide-binding</keyword>
<keyword id="KW-1185">Reference proteome</keyword>
<keyword id="KW-0808">Transferase</keyword>
<sequence>MRKVLVFLKNSKKAFETFKRVERVLKDLNLSYKKFINRKELFKVLKPKDYELFLVIGGDGTFLSAARIASRFGVPLVGVNEGRFGFLTEIKKEEIKKVLPLVLEGRAKLQERLMIDVYLRSRNRLRYLGNYLNDAVISKSSIARIIRTKVFINGEEVLEVFGDGVILSTPTGSTAYALSAGGPIVYPESQNLLFVPICPHTLSNRPLVLPSKFEVKFKVVSENMEAFLTLDGQEGFHLKKGDEVIVKRSRYVCRMYSHPRKSFFGILKEKLRWG</sequence>
<name>NADK_AQUAE</name>
<organism>
    <name type="scientific">Aquifex aeolicus (strain VF5)</name>
    <dbReference type="NCBI Taxonomy" id="224324"/>
    <lineage>
        <taxon>Bacteria</taxon>
        <taxon>Pseudomonadati</taxon>
        <taxon>Aquificota</taxon>
        <taxon>Aquificia</taxon>
        <taxon>Aquificales</taxon>
        <taxon>Aquificaceae</taxon>
        <taxon>Aquifex</taxon>
    </lineage>
</organism>